<gene>
    <name evidence="4 9" type="primary">IGHV3-15</name>
</gene>
<keyword id="KW-1064">Adaptive immunity</keyword>
<keyword id="KW-1003">Cell membrane</keyword>
<keyword id="KW-1015">Disulfide bond</keyword>
<keyword id="KW-0391">Immunity</keyword>
<keyword id="KW-1280">Immunoglobulin</keyword>
<keyword id="KW-0393">Immunoglobulin domain</keyword>
<keyword id="KW-0472">Membrane</keyword>
<keyword id="KW-1267">Proteomics identification</keyword>
<keyword id="KW-1185">Reference proteome</keyword>
<keyword id="KW-0964">Secreted</keyword>
<keyword id="KW-0732">Signal</keyword>
<dbReference type="EMBL" id="AC247036">
    <property type="status" value="NOT_ANNOTATED_CDS"/>
    <property type="molecule type" value="Genomic_DNA"/>
</dbReference>
<dbReference type="EMDB" id="EMD-15073"/>
<dbReference type="EMDB" id="EMD-28183"/>
<dbReference type="EMDB" id="EMD-30500"/>
<dbReference type="EMDB" id="EMD-30503"/>
<dbReference type="SMR" id="A0A0B4J1V0"/>
<dbReference type="FunCoup" id="A0A0B4J1V0">
    <property type="interactions" value="251"/>
</dbReference>
<dbReference type="STRING" id="9606.ENSP00000479675"/>
<dbReference type="IMGT_GENE-DB" id="IGHV3-15"/>
<dbReference type="BioMuta" id="IGHV3-15"/>
<dbReference type="jPOST" id="A0A0B4J1V0"/>
<dbReference type="MassIVE" id="A0A0B4J1V0"/>
<dbReference type="PaxDb" id="9606-ENSP00000479675"/>
<dbReference type="Ensembl" id="ENST00000390603.2">
    <property type="protein sequence ID" value="ENSP00000375012.2"/>
    <property type="gene ID" value="ENSG00000211943.2"/>
</dbReference>
<dbReference type="Ensembl" id="ENST00000632959.1">
    <property type="protein sequence ID" value="ENSP00000488894.1"/>
    <property type="gene ID" value="ENSG00000282290.1"/>
</dbReference>
<dbReference type="AGR" id="HGNC:5582"/>
<dbReference type="GeneCards" id="IGHV3-15"/>
<dbReference type="HGNC" id="HGNC:5582">
    <property type="gene designation" value="IGHV3-15"/>
</dbReference>
<dbReference type="HPA" id="ENSG00000211943">
    <property type="expression patterns" value="Group enriched (intestine, stomach, urinary bladder)"/>
</dbReference>
<dbReference type="neXtProt" id="NX_A0A0B4J1V0"/>
<dbReference type="OpenTargets" id="ENSG00000211943"/>
<dbReference type="VEuPathDB" id="HostDB:ENSG00000211943"/>
<dbReference type="eggNOG" id="ENOG502TDDK">
    <property type="taxonomic scope" value="Eukaryota"/>
</dbReference>
<dbReference type="GeneTree" id="ENSGT01050000244871"/>
<dbReference type="HOGENOM" id="CLU_077975_5_2_1"/>
<dbReference type="InParanoid" id="A0A0B4J1V0"/>
<dbReference type="OMA" id="VYYCTTY"/>
<dbReference type="OrthoDB" id="9945861at2759"/>
<dbReference type="PAN-GO" id="A0A0B4J1V0">
    <property type="GO annotations" value="11 GO annotations based on evolutionary models"/>
</dbReference>
<dbReference type="PhylomeDB" id="A0A0B4J1V0"/>
<dbReference type="SignaLink" id="A0A0B4J1V0"/>
<dbReference type="ChiTaRS" id="IGHV3-15">
    <property type="organism name" value="human"/>
</dbReference>
<dbReference type="Pharos" id="A0A0B4J1V0">
    <property type="development level" value="Tdark"/>
</dbReference>
<dbReference type="PRO" id="PR:A0A0B4J1V0"/>
<dbReference type="Proteomes" id="UP000005640">
    <property type="component" value="Chromosome 14"/>
</dbReference>
<dbReference type="RNAct" id="A0A0B4J1V0">
    <property type="molecule type" value="protein"/>
</dbReference>
<dbReference type="Bgee" id="ENSG00000211943">
    <property type="expression patterns" value="Expressed in duodenum and 92 other cell types or tissues"/>
</dbReference>
<dbReference type="GO" id="GO:0005576">
    <property type="term" value="C:extracellular region"/>
    <property type="evidence" value="ECO:0007669"/>
    <property type="project" value="UniProtKB-SubCell"/>
</dbReference>
<dbReference type="GO" id="GO:0019814">
    <property type="term" value="C:immunoglobulin complex"/>
    <property type="evidence" value="ECO:0007669"/>
    <property type="project" value="UniProtKB-KW"/>
</dbReference>
<dbReference type="GO" id="GO:0005886">
    <property type="term" value="C:plasma membrane"/>
    <property type="evidence" value="ECO:0007669"/>
    <property type="project" value="UniProtKB-SubCell"/>
</dbReference>
<dbReference type="GO" id="GO:0003823">
    <property type="term" value="F:antigen binding"/>
    <property type="evidence" value="ECO:0000318"/>
    <property type="project" value="GO_Central"/>
</dbReference>
<dbReference type="GO" id="GO:0016064">
    <property type="term" value="P:immunoglobulin mediated immune response"/>
    <property type="evidence" value="ECO:0000318"/>
    <property type="project" value="GO_Central"/>
</dbReference>
<dbReference type="CDD" id="cd04981">
    <property type="entry name" value="IgV_H"/>
    <property type="match status" value="1"/>
</dbReference>
<dbReference type="FunFam" id="2.60.40.10:FF:002098">
    <property type="entry name" value="Immunoglobulin heavy variable 3-72"/>
    <property type="match status" value="1"/>
</dbReference>
<dbReference type="Gene3D" id="2.60.40.10">
    <property type="entry name" value="Immunoglobulins"/>
    <property type="match status" value="1"/>
</dbReference>
<dbReference type="InterPro" id="IPR007110">
    <property type="entry name" value="Ig-like_dom"/>
</dbReference>
<dbReference type="InterPro" id="IPR036179">
    <property type="entry name" value="Ig-like_dom_sf"/>
</dbReference>
<dbReference type="InterPro" id="IPR013783">
    <property type="entry name" value="Ig-like_fold"/>
</dbReference>
<dbReference type="InterPro" id="IPR013106">
    <property type="entry name" value="Ig_V-set"/>
</dbReference>
<dbReference type="InterPro" id="IPR050199">
    <property type="entry name" value="IgHV"/>
</dbReference>
<dbReference type="PANTHER" id="PTHR23266">
    <property type="entry name" value="IMMUNOGLOBULIN HEAVY CHAIN"/>
    <property type="match status" value="1"/>
</dbReference>
<dbReference type="Pfam" id="PF07686">
    <property type="entry name" value="V-set"/>
    <property type="match status" value="1"/>
</dbReference>
<dbReference type="SMART" id="SM00406">
    <property type="entry name" value="IGv"/>
    <property type="match status" value="1"/>
</dbReference>
<dbReference type="SUPFAM" id="SSF48726">
    <property type="entry name" value="Immunoglobulin"/>
    <property type="match status" value="1"/>
</dbReference>
<dbReference type="PROSITE" id="PS50835">
    <property type="entry name" value="IG_LIKE"/>
    <property type="match status" value="1"/>
</dbReference>
<organism>
    <name type="scientific">Homo sapiens</name>
    <name type="common">Human</name>
    <dbReference type="NCBI Taxonomy" id="9606"/>
    <lineage>
        <taxon>Eukaryota</taxon>
        <taxon>Metazoa</taxon>
        <taxon>Chordata</taxon>
        <taxon>Craniata</taxon>
        <taxon>Vertebrata</taxon>
        <taxon>Euteleostomi</taxon>
        <taxon>Mammalia</taxon>
        <taxon>Eutheria</taxon>
        <taxon>Euarchontoglires</taxon>
        <taxon>Primates</taxon>
        <taxon>Haplorrhini</taxon>
        <taxon>Catarrhini</taxon>
        <taxon>Hominidae</taxon>
        <taxon>Homo</taxon>
    </lineage>
</organism>
<comment type="function">
    <text evidence="5 6 7 8">V region of the variable domain of immunoglobulin heavy chains that participates in the antigen recognition (PubMed:24600447). Immunoglobulins, also known as antibodies, are membrane-bound or secreted glycoproteins produced by B lymphocytes. In the recognition phase of humoral immunity, the membrane-bound immunoglobulins serve as receptors which, upon binding of a specific antigen, trigger the clonal expansion and differentiation of B lymphocytes into immunoglobulins-secreting plasma cells. Secreted immunoglobulins mediate the effector phase of humoral immunity, which results in the elimination of bound antigens (PubMed:20176268, PubMed:22158414). The antigen binding site is formed by the variable domain of one heavy chain, together with that of its associated light chain. Thus, each immunoglobulin has two antigen binding sites with remarkable affinity for a particular antigen. The variable domains are assembled by a process called V-(D)-J rearrangement and can then be subjected to somatic hypermutations which, after exposure to antigen and selection, allow affinity maturation for a particular antigen (PubMed:17576170, PubMed:20176268).</text>
</comment>
<comment type="subunit">
    <text evidence="6">Immunoglobulins are composed of two identical heavy chains and two identical light chains; disulfide-linked.</text>
</comment>
<comment type="subcellular location">
    <subcellularLocation>
        <location evidence="6 7">Secreted</location>
    </subcellularLocation>
    <subcellularLocation>
        <location evidence="6 7">Cell membrane</location>
    </subcellularLocation>
</comment>
<comment type="polymorphism">
    <text evidence="10">There are several alleles. The sequence shown is that of IMGT allele IGHV3-15*01.</text>
</comment>
<comment type="caution">
    <text evidence="10">For examples of full-length immunoglobulin heavy chains (of different isotypes) see AC P0DOX2, AC P0DOX3, AC P0DOX4, AC P0DOX5 and AC P0DOX6.</text>
</comment>
<accession>A0A0B4J1V0</accession>
<sequence>MEFGLSWIFLAAILKGVQCEVQLVESGGGLVKPGGSLRLSCAASGFTFSNAWMSWVRQAPGKGLEWVGRIKSKTDGGTTDYAAPVKGRFTISRDDSKNTLYLQMNSLKTEDTAVYYCTT</sequence>
<protein>
    <recommendedName>
        <fullName evidence="4 9">Immunoglobulin heavy variable 3-15</fullName>
    </recommendedName>
</protein>
<feature type="signal peptide" evidence="2">
    <location>
        <begin position="1"/>
        <end position="19"/>
    </location>
</feature>
<feature type="chain" id="PRO_5007390939" description="Immunoglobulin heavy variable 3-15" evidence="2">
    <location>
        <begin position="20"/>
        <end position="119"/>
    </location>
</feature>
<feature type="domain" description="Ig-like" evidence="3">
    <location>
        <begin position="20"/>
        <end position="119" status="greater than"/>
    </location>
</feature>
<feature type="region of interest" description="Framework-1" evidence="1">
    <location>
        <begin position="20"/>
        <end position="44"/>
    </location>
</feature>
<feature type="region of interest" description="Complementarity-determining-1" evidence="1">
    <location>
        <begin position="45"/>
        <end position="52"/>
    </location>
</feature>
<feature type="region of interest" description="Framework-2" evidence="1">
    <location>
        <begin position="53"/>
        <end position="69"/>
    </location>
</feature>
<feature type="region of interest" description="Complementarity-determining-2" evidence="1">
    <location>
        <begin position="70"/>
        <end position="79"/>
    </location>
</feature>
<feature type="region of interest" description="Framework-3" evidence="1">
    <location>
        <begin position="80"/>
        <end position="117"/>
    </location>
</feature>
<feature type="region of interest" description="Complementarity-determining-3" evidence="1">
    <location>
        <begin position="118"/>
        <end position="119" status="greater than"/>
    </location>
</feature>
<feature type="disulfide bond" evidence="3">
    <location>
        <begin position="41"/>
        <end position="117"/>
    </location>
</feature>
<feature type="non-terminal residue">
    <location>
        <position position="119"/>
    </location>
</feature>
<proteinExistence type="evidence at protein level"/>
<name>HV315_HUMAN</name>
<reference key="1">
    <citation type="journal article" date="2003" name="Nature">
        <title>The DNA sequence and analysis of human chromosome 14.</title>
        <authorList>
            <person name="Heilig R."/>
            <person name="Eckenberg R."/>
            <person name="Petit J.-L."/>
            <person name="Fonknechten N."/>
            <person name="Da Silva C."/>
            <person name="Cattolico L."/>
            <person name="Levy M."/>
            <person name="Barbe V."/>
            <person name="De Berardinis V."/>
            <person name="Ureta-Vidal A."/>
            <person name="Pelletier E."/>
            <person name="Vico V."/>
            <person name="Anthouard V."/>
            <person name="Rowen L."/>
            <person name="Madan A."/>
            <person name="Qin S."/>
            <person name="Sun H."/>
            <person name="Du H."/>
            <person name="Pepin K."/>
            <person name="Artiguenave F."/>
            <person name="Robert C."/>
            <person name="Cruaud C."/>
            <person name="Bruels T."/>
            <person name="Jaillon O."/>
            <person name="Friedlander L."/>
            <person name="Samson G."/>
            <person name="Brottier P."/>
            <person name="Cure S."/>
            <person name="Segurens B."/>
            <person name="Aniere F."/>
            <person name="Samain S."/>
            <person name="Crespeau H."/>
            <person name="Abbasi N."/>
            <person name="Aiach N."/>
            <person name="Boscus D."/>
            <person name="Dickhoff R."/>
            <person name="Dors M."/>
            <person name="Dubois I."/>
            <person name="Friedman C."/>
            <person name="Gouyvenoux M."/>
            <person name="James R."/>
            <person name="Madan A."/>
            <person name="Mairey-Estrada B."/>
            <person name="Mangenot S."/>
            <person name="Martins N."/>
            <person name="Menard M."/>
            <person name="Oztas S."/>
            <person name="Ratcliffe A."/>
            <person name="Shaffer T."/>
            <person name="Trask B."/>
            <person name="Vacherie B."/>
            <person name="Bellemere C."/>
            <person name="Belser C."/>
            <person name="Besnard-Gonnet M."/>
            <person name="Bartol-Mavel D."/>
            <person name="Boutard M."/>
            <person name="Briez-Silla S."/>
            <person name="Combette S."/>
            <person name="Dufosse-Laurent V."/>
            <person name="Ferron C."/>
            <person name="Lechaplais C."/>
            <person name="Louesse C."/>
            <person name="Muselet D."/>
            <person name="Magdelenat G."/>
            <person name="Pateau E."/>
            <person name="Petit E."/>
            <person name="Sirvain-Trukniewicz P."/>
            <person name="Trybou A."/>
            <person name="Vega-Czarny N."/>
            <person name="Bataille E."/>
            <person name="Bluet E."/>
            <person name="Bordelais I."/>
            <person name="Dubois M."/>
            <person name="Dumont C."/>
            <person name="Guerin T."/>
            <person name="Haffray S."/>
            <person name="Hammadi R."/>
            <person name="Muanga J."/>
            <person name="Pellouin V."/>
            <person name="Robert D."/>
            <person name="Wunderle E."/>
            <person name="Gauguet G."/>
            <person name="Roy A."/>
            <person name="Sainte-Marthe L."/>
            <person name="Verdier J."/>
            <person name="Verdier-Discala C."/>
            <person name="Hillier L.W."/>
            <person name="Fulton L."/>
            <person name="McPherson J."/>
            <person name="Matsuda F."/>
            <person name="Wilson R."/>
            <person name="Scarpelli C."/>
            <person name="Gyapay G."/>
            <person name="Wincker P."/>
            <person name="Saurin W."/>
            <person name="Quetier F."/>
            <person name="Waterston R."/>
            <person name="Hood L."/>
            <person name="Weissenbach J."/>
        </authorList>
    </citation>
    <scope>NUCLEOTIDE SEQUENCE [LARGE SCALE GENOMIC DNA] (IMGT ALLELE IGHV3-15*01)</scope>
</reference>
<reference key="2">
    <citation type="journal article" date="2001" name="Exp. Clin. Immunogenet.">
        <title>Nomenclature of the human immunoglobulin heavy (IGH) genes.</title>
        <authorList>
            <person name="Lefranc M.P."/>
        </authorList>
    </citation>
    <scope>NOMENCLATURE</scope>
</reference>
<reference key="3">
    <citation type="book" date="2001" name="The Immunoglobulin FactsBook.">
        <title>The Immunoglobulin FactsBook.</title>
        <editorList>
            <person name="Lefranc M.P."/>
            <person name="Lefranc G."/>
        </editorList>
        <authorList>
            <person name="Lefranc M.P."/>
            <person name="Lefranc G."/>
        </authorList>
    </citation>
    <scope>NOMENCLATURE</scope>
</reference>
<reference key="4">
    <citation type="journal article" date="2007" name="Annu. Rev. Genet.">
        <title>Immunoglobulin somatic hypermutation.</title>
        <authorList>
            <person name="Teng G."/>
            <person name="Papavasiliou F.N."/>
        </authorList>
    </citation>
    <scope>REVIEW ON SOMATIC HYPERMUTATION</scope>
</reference>
<reference key="5">
    <citation type="journal article" date="2010" name="J. Allergy Clin. Immunol.">
        <title>Structure and function of immunoglobulins.</title>
        <authorList>
            <person name="Schroeder H.W. Jr."/>
            <person name="Cavacini L."/>
        </authorList>
    </citation>
    <scope>REVIEW ON IMMUNOGLOBULINS</scope>
</reference>
<reference key="6">
    <citation type="journal article" date="2012" name="Nat. Rev. Immunol.">
        <title>Molecular programming of B cell memory.</title>
        <authorList>
            <person name="McHeyzer-Williams M."/>
            <person name="Okitsu S."/>
            <person name="Wang N."/>
            <person name="McHeyzer-Williams L."/>
        </authorList>
    </citation>
    <scope>REVIEW ON FUNCTION</scope>
</reference>
<reference key="7">
    <citation type="journal article" date="2014" name="Front. Immunol.">
        <title>Immunoglobulin and T Cell Receptor Genes: IMGT((R)) and the Birth and Rise of Immunoinformatics.</title>
        <authorList>
            <person name="Lefranc M.P."/>
        </authorList>
    </citation>
    <scope>NOMENCLATURE</scope>
</reference>
<evidence type="ECO:0000250" key="1">
    <source>
        <dbReference type="UniProtKB" id="P23083"/>
    </source>
</evidence>
<evidence type="ECO:0000255" key="2"/>
<evidence type="ECO:0000255" key="3">
    <source>
        <dbReference type="PROSITE-ProRule" id="PRU00114"/>
    </source>
</evidence>
<evidence type="ECO:0000303" key="4">
    <source>
    </source>
</evidence>
<evidence type="ECO:0000303" key="5">
    <source>
    </source>
</evidence>
<evidence type="ECO:0000303" key="6">
    <source>
    </source>
</evidence>
<evidence type="ECO:0000303" key="7">
    <source>
    </source>
</evidence>
<evidence type="ECO:0000303" key="8">
    <source>
    </source>
</evidence>
<evidence type="ECO:0000303" key="9">
    <source ref="3"/>
</evidence>
<evidence type="ECO:0000305" key="10"/>